<gene>
    <name type="ordered locus">BcerKBAB4_4147</name>
</gene>
<proteinExistence type="inferred from homology"/>
<sequence length="270" mass="30375">MDNKIVYVVSDSVGETADLVVRAAMGQFPFAPDIRRVPYVEDTGTLKEVISIAKSNQALICFTLVKPDMRQYLLTEAAKEGVEAYDIIGPLIDQIEEITGQVPRYEPGVVRRLDEEYFKKIEAIEFAVKYDDGRDARGILKADIVLIGISRTSKTPLSQYLAHNKRLKVANVPLVPEVDPPEELYQVAKEKCFGLKIIPDKLNHIRKERLKSLGLSDGATYANINRIQEEIDHFEEVISKINCQVIDVSNKAIEETANIIVNAVQNQKMF</sequence>
<evidence type="ECO:0000255" key="1">
    <source>
        <dbReference type="HAMAP-Rule" id="MF_00921"/>
    </source>
</evidence>
<accession>A9VHS3</accession>
<protein>
    <recommendedName>
        <fullName evidence="1">Putative pyruvate, phosphate dikinase regulatory protein</fullName>
        <shortName evidence="1">PPDK regulatory protein</shortName>
        <ecNumber evidence="1">2.7.11.32</ecNumber>
        <ecNumber evidence="1">2.7.4.27</ecNumber>
    </recommendedName>
</protein>
<dbReference type="EC" id="2.7.11.32" evidence="1"/>
<dbReference type="EC" id="2.7.4.27" evidence="1"/>
<dbReference type="EMBL" id="CP000903">
    <property type="protein sequence ID" value="ABY45308.1"/>
    <property type="molecule type" value="Genomic_DNA"/>
</dbReference>
<dbReference type="RefSeq" id="WP_002015180.1">
    <property type="nucleotide sequence ID" value="NC_010184.1"/>
</dbReference>
<dbReference type="SMR" id="A9VHS3"/>
<dbReference type="KEGG" id="bwe:BcerKBAB4_4147"/>
<dbReference type="eggNOG" id="COG1806">
    <property type="taxonomic scope" value="Bacteria"/>
</dbReference>
<dbReference type="HOGENOM" id="CLU_046206_2_1_9"/>
<dbReference type="Proteomes" id="UP000002154">
    <property type="component" value="Chromosome"/>
</dbReference>
<dbReference type="GO" id="GO:0043531">
    <property type="term" value="F:ADP binding"/>
    <property type="evidence" value="ECO:0007669"/>
    <property type="project" value="UniProtKB-UniRule"/>
</dbReference>
<dbReference type="GO" id="GO:0005524">
    <property type="term" value="F:ATP binding"/>
    <property type="evidence" value="ECO:0007669"/>
    <property type="project" value="InterPro"/>
</dbReference>
<dbReference type="GO" id="GO:0016776">
    <property type="term" value="F:phosphotransferase activity, phosphate group as acceptor"/>
    <property type="evidence" value="ECO:0007669"/>
    <property type="project" value="UniProtKB-UniRule"/>
</dbReference>
<dbReference type="GO" id="GO:0004674">
    <property type="term" value="F:protein serine/threonine kinase activity"/>
    <property type="evidence" value="ECO:0007669"/>
    <property type="project" value="UniProtKB-UniRule"/>
</dbReference>
<dbReference type="HAMAP" id="MF_00921">
    <property type="entry name" value="PDRP"/>
    <property type="match status" value="1"/>
</dbReference>
<dbReference type="InterPro" id="IPR005177">
    <property type="entry name" value="Kinase-pyrophosphorylase"/>
</dbReference>
<dbReference type="InterPro" id="IPR026565">
    <property type="entry name" value="PPDK_reg"/>
</dbReference>
<dbReference type="NCBIfam" id="NF003742">
    <property type="entry name" value="PRK05339.1"/>
    <property type="match status" value="1"/>
</dbReference>
<dbReference type="PANTHER" id="PTHR31756">
    <property type="entry name" value="PYRUVATE, PHOSPHATE DIKINASE REGULATORY PROTEIN 1, CHLOROPLASTIC"/>
    <property type="match status" value="1"/>
</dbReference>
<dbReference type="PANTHER" id="PTHR31756:SF3">
    <property type="entry name" value="PYRUVATE, PHOSPHATE DIKINASE REGULATORY PROTEIN 1, CHLOROPLASTIC"/>
    <property type="match status" value="1"/>
</dbReference>
<dbReference type="Pfam" id="PF03618">
    <property type="entry name" value="Kinase-PPPase"/>
    <property type="match status" value="1"/>
</dbReference>
<feature type="chain" id="PRO_1000136455" description="Putative pyruvate, phosphate dikinase regulatory protein">
    <location>
        <begin position="1"/>
        <end position="270"/>
    </location>
</feature>
<feature type="binding site" evidence="1">
    <location>
        <begin position="148"/>
        <end position="155"/>
    </location>
    <ligand>
        <name>ADP</name>
        <dbReference type="ChEBI" id="CHEBI:456216"/>
    </ligand>
</feature>
<comment type="function">
    <text evidence="1">Bifunctional serine/threonine kinase and phosphorylase involved in the regulation of the pyruvate, phosphate dikinase (PPDK) by catalyzing its phosphorylation/dephosphorylation.</text>
</comment>
<comment type="catalytic activity">
    <reaction evidence="1">
        <text>N(tele)-phospho-L-histidyl/L-threonyl-[pyruvate, phosphate dikinase] + ADP = N(tele)-phospho-L-histidyl/O-phospho-L-threonyl-[pyruvate, phosphate dikinase] + AMP + H(+)</text>
        <dbReference type="Rhea" id="RHEA:43692"/>
        <dbReference type="Rhea" id="RHEA-COMP:10650"/>
        <dbReference type="Rhea" id="RHEA-COMP:10651"/>
        <dbReference type="ChEBI" id="CHEBI:15378"/>
        <dbReference type="ChEBI" id="CHEBI:30013"/>
        <dbReference type="ChEBI" id="CHEBI:61977"/>
        <dbReference type="ChEBI" id="CHEBI:83586"/>
        <dbReference type="ChEBI" id="CHEBI:456215"/>
        <dbReference type="ChEBI" id="CHEBI:456216"/>
        <dbReference type="EC" id="2.7.11.32"/>
    </reaction>
</comment>
<comment type="catalytic activity">
    <reaction evidence="1">
        <text>N(tele)-phospho-L-histidyl/O-phospho-L-threonyl-[pyruvate, phosphate dikinase] + phosphate + H(+) = N(tele)-phospho-L-histidyl/L-threonyl-[pyruvate, phosphate dikinase] + diphosphate</text>
        <dbReference type="Rhea" id="RHEA:43696"/>
        <dbReference type="Rhea" id="RHEA-COMP:10650"/>
        <dbReference type="Rhea" id="RHEA-COMP:10651"/>
        <dbReference type="ChEBI" id="CHEBI:15378"/>
        <dbReference type="ChEBI" id="CHEBI:30013"/>
        <dbReference type="ChEBI" id="CHEBI:33019"/>
        <dbReference type="ChEBI" id="CHEBI:43474"/>
        <dbReference type="ChEBI" id="CHEBI:61977"/>
        <dbReference type="ChEBI" id="CHEBI:83586"/>
        <dbReference type="EC" id="2.7.4.27"/>
    </reaction>
</comment>
<comment type="similarity">
    <text evidence="1">Belongs to the pyruvate, phosphate/water dikinase regulatory protein family. PDRP subfamily.</text>
</comment>
<keyword id="KW-0418">Kinase</keyword>
<keyword id="KW-0547">Nucleotide-binding</keyword>
<keyword id="KW-0723">Serine/threonine-protein kinase</keyword>
<keyword id="KW-0808">Transferase</keyword>
<name>PDRP_BACMK</name>
<reference key="1">
    <citation type="journal article" date="2008" name="Chem. Biol. Interact.">
        <title>Extending the Bacillus cereus group genomics to putative food-borne pathogens of different toxicity.</title>
        <authorList>
            <person name="Lapidus A."/>
            <person name="Goltsman E."/>
            <person name="Auger S."/>
            <person name="Galleron N."/>
            <person name="Segurens B."/>
            <person name="Dossat C."/>
            <person name="Land M.L."/>
            <person name="Broussolle V."/>
            <person name="Brillard J."/>
            <person name="Guinebretiere M.-H."/>
            <person name="Sanchis V."/>
            <person name="Nguen-the C."/>
            <person name="Lereclus D."/>
            <person name="Richardson P."/>
            <person name="Wincker P."/>
            <person name="Weissenbach J."/>
            <person name="Ehrlich S.D."/>
            <person name="Sorokin A."/>
        </authorList>
    </citation>
    <scope>NUCLEOTIDE SEQUENCE [LARGE SCALE GENOMIC DNA]</scope>
    <source>
        <strain>KBAB4</strain>
    </source>
</reference>
<organism>
    <name type="scientific">Bacillus mycoides (strain KBAB4)</name>
    <name type="common">Bacillus weihenstephanensis</name>
    <dbReference type="NCBI Taxonomy" id="315730"/>
    <lineage>
        <taxon>Bacteria</taxon>
        <taxon>Bacillati</taxon>
        <taxon>Bacillota</taxon>
        <taxon>Bacilli</taxon>
        <taxon>Bacillales</taxon>
        <taxon>Bacillaceae</taxon>
        <taxon>Bacillus</taxon>
        <taxon>Bacillus cereus group</taxon>
    </lineage>
</organism>